<dbReference type="EC" id="3.6.1.27" evidence="1"/>
<dbReference type="EMBL" id="CT971583">
    <property type="protein sequence ID" value="CAK24627.1"/>
    <property type="molecule type" value="Genomic_DNA"/>
</dbReference>
<dbReference type="SMR" id="A5GNW2"/>
<dbReference type="STRING" id="32051.SynWH7803_2201"/>
<dbReference type="KEGG" id="syx:SynWH7803_2201"/>
<dbReference type="eggNOG" id="COG1968">
    <property type="taxonomic scope" value="Bacteria"/>
</dbReference>
<dbReference type="HOGENOM" id="CLU_060296_1_0_3"/>
<dbReference type="OrthoDB" id="9808289at2"/>
<dbReference type="Proteomes" id="UP000001566">
    <property type="component" value="Chromosome"/>
</dbReference>
<dbReference type="GO" id="GO:0005886">
    <property type="term" value="C:plasma membrane"/>
    <property type="evidence" value="ECO:0007669"/>
    <property type="project" value="UniProtKB-SubCell"/>
</dbReference>
<dbReference type="GO" id="GO:0050380">
    <property type="term" value="F:undecaprenyl-diphosphatase activity"/>
    <property type="evidence" value="ECO:0007669"/>
    <property type="project" value="UniProtKB-UniRule"/>
</dbReference>
<dbReference type="GO" id="GO:0071555">
    <property type="term" value="P:cell wall organization"/>
    <property type="evidence" value="ECO:0007669"/>
    <property type="project" value="UniProtKB-KW"/>
</dbReference>
<dbReference type="GO" id="GO:0009252">
    <property type="term" value="P:peptidoglycan biosynthetic process"/>
    <property type="evidence" value="ECO:0007669"/>
    <property type="project" value="UniProtKB-KW"/>
</dbReference>
<dbReference type="GO" id="GO:0008360">
    <property type="term" value="P:regulation of cell shape"/>
    <property type="evidence" value="ECO:0007669"/>
    <property type="project" value="UniProtKB-KW"/>
</dbReference>
<dbReference type="GO" id="GO:0046677">
    <property type="term" value="P:response to antibiotic"/>
    <property type="evidence" value="ECO:0007669"/>
    <property type="project" value="UniProtKB-UniRule"/>
</dbReference>
<dbReference type="HAMAP" id="MF_01006">
    <property type="entry name" value="Undec_diphosphatase"/>
    <property type="match status" value="1"/>
</dbReference>
<dbReference type="InterPro" id="IPR003824">
    <property type="entry name" value="UppP"/>
</dbReference>
<dbReference type="NCBIfam" id="NF001394">
    <property type="entry name" value="PRK00281.2-5"/>
    <property type="match status" value="1"/>
</dbReference>
<dbReference type="NCBIfam" id="TIGR00753">
    <property type="entry name" value="undec_PP_bacA"/>
    <property type="match status" value="1"/>
</dbReference>
<dbReference type="PANTHER" id="PTHR30622">
    <property type="entry name" value="UNDECAPRENYL-DIPHOSPHATASE"/>
    <property type="match status" value="1"/>
</dbReference>
<dbReference type="PANTHER" id="PTHR30622:SF4">
    <property type="entry name" value="UNDECAPRENYL-DIPHOSPHATASE"/>
    <property type="match status" value="1"/>
</dbReference>
<dbReference type="Pfam" id="PF02673">
    <property type="entry name" value="BacA"/>
    <property type="match status" value="1"/>
</dbReference>
<proteinExistence type="inferred from homology"/>
<protein>
    <recommendedName>
        <fullName evidence="1">Undecaprenyl-diphosphatase</fullName>
        <ecNumber evidence="1">3.6.1.27</ecNumber>
    </recommendedName>
    <alternativeName>
        <fullName evidence="1">Bacitracin resistance protein</fullName>
    </alternativeName>
    <alternativeName>
        <fullName evidence="1">Undecaprenyl pyrophosphate phosphatase</fullName>
    </alternativeName>
</protein>
<accession>A5GNW2</accession>
<comment type="function">
    <text evidence="1">Catalyzes the dephosphorylation of undecaprenyl diphosphate (UPP). Confers resistance to bacitracin.</text>
</comment>
<comment type="catalytic activity">
    <reaction evidence="1">
        <text>di-trans,octa-cis-undecaprenyl diphosphate + H2O = di-trans,octa-cis-undecaprenyl phosphate + phosphate + H(+)</text>
        <dbReference type="Rhea" id="RHEA:28094"/>
        <dbReference type="ChEBI" id="CHEBI:15377"/>
        <dbReference type="ChEBI" id="CHEBI:15378"/>
        <dbReference type="ChEBI" id="CHEBI:43474"/>
        <dbReference type="ChEBI" id="CHEBI:58405"/>
        <dbReference type="ChEBI" id="CHEBI:60392"/>
        <dbReference type="EC" id="3.6.1.27"/>
    </reaction>
</comment>
<comment type="subcellular location">
    <subcellularLocation>
        <location evidence="1">Cell inner membrane</location>
        <topology evidence="1">Multi-pass membrane protein</topology>
    </subcellularLocation>
</comment>
<comment type="miscellaneous">
    <text>Bacitracin is thought to be involved in the inhibition of peptidoglycan synthesis by sequestering undecaprenyl diphosphate, thereby reducing the pool of lipid carrier available.</text>
</comment>
<comment type="similarity">
    <text evidence="1">Belongs to the UppP family.</text>
</comment>
<name>UPPP_SYNPW</name>
<organism>
    <name type="scientific">Synechococcus sp. (strain WH7803)</name>
    <dbReference type="NCBI Taxonomy" id="32051"/>
    <lineage>
        <taxon>Bacteria</taxon>
        <taxon>Bacillati</taxon>
        <taxon>Cyanobacteriota</taxon>
        <taxon>Cyanophyceae</taxon>
        <taxon>Synechococcales</taxon>
        <taxon>Synechococcaceae</taxon>
        <taxon>Synechococcus</taxon>
    </lineage>
</organism>
<gene>
    <name evidence="1" type="primary">uppP</name>
    <name type="ordered locus">SynWH7803_2201</name>
</gene>
<keyword id="KW-0046">Antibiotic resistance</keyword>
<keyword id="KW-0997">Cell inner membrane</keyword>
<keyword id="KW-1003">Cell membrane</keyword>
<keyword id="KW-0133">Cell shape</keyword>
<keyword id="KW-0961">Cell wall biogenesis/degradation</keyword>
<keyword id="KW-0378">Hydrolase</keyword>
<keyword id="KW-0472">Membrane</keyword>
<keyword id="KW-0573">Peptidoglycan synthesis</keyword>
<keyword id="KW-1185">Reference proteome</keyword>
<keyword id="KW-0812">Transmembrane</keyword>
<keyword id="KW-1133">Transmembrane helix</keyword>
<feature type="chain" id="PRO_0000303038" description="Undecaprenyl-diphosphatase">
    <location>
        <begin position="1"/>
        <end position="286"/>
    </location>
</feature>
<feature type="transmembrane region" description="Helical" evidence="1">
    <location>
        <begin position="50"/>
        <end position="70"/>
    </location>
</feature>
<feature type="transmembrane region" description="Helical" evidence="1">
    <location>
        <begin position="97"/>
        <end position="117"/>
    </location>
</feature>
<feature type="transmembrane region" description="Helical" evidence="1">
    <location>
        <begin position="127"/>
        <end position="147"/>
    </location>
</feature>
<feature type="transmembrane region" description="Helical" evidence="1">
    <location>
        <begin position="165"/>
        <end position="185"/>
    </location>
</feature>
<feature type="transmembrane region" description="Helical" evidence="1">
    <location>
        <begin position="200"/>
        <end position="220"/>
    </location>
</feature>
<feature type="transmembrane region" description="Helical" evidence="1">
    <location>
        <begin position="230"/>
        <end position="250"/>
    </location>
</feature>
<feature type="transmembrane region" description="Helical" evidence="1">
    <location>
        <begin position="262"/>
        <end position="282"/>
    </location>
</feature>
<evidence type="ECO:0000255" key="1">
    <source>
        <dbReference type="HAMAP-Rule" id="MF_01006"/>
    </source>
</evidence>
<reference key="1">
    <citation type="submission" date="2006-05" db="EMBL/GenBank/DDBJ databases">
        <authorList>
            <consortium name="Genoscope"/>
        </authorList>
    </citation>
    <scope>NUCLEOTIDE SEQUENCE [LARGE SCALE GENOMIC DNA]</scope>
    <source>
        <strain>WH7803</strain>
    </source>
</reference>
<sequence length="286" mass="30507">MESAVSEPGLLEAIWRDFVLGVVQGLTEFLPISSTAHLKIVPVLAGWGDPGVSVTAVIQLGSIVAVIAYFRADLAAVLRGISGAVRRGQWREPEARLGIAMTIGTLPILFAGLAIKLYWPGYETSPLRSVPAIAGVSILMALLLALAERFGPRSKQLDQVQGRDGLLVGLAQVLALIPGVSRSGSTLTASLFDSWKRPDAARFSFLLGIPAITIAGLVELKDAFTEPSAGGVLPLMVGIVSAAVVSWLAIDWLLKFLQRHSTWVFVIYRLLFGILLLAWWAGSGSN</sequence>